<comment type="function">
    <text evidence="1">RNA-binding protein involved in the biogenesis of circular RNAs (circRNAs), which are produced by back-splicing circularization of pre-mRNAs. Acts by binding to both exon-intron boundary and 3'-UTR of pre-mRNAs to promote circRNA biogenesis through dimerization and the association with the spliceosome. Also binds the poly(A) tail of mRNAs; controlling poly(A) length.</text>
</comment>
<comment type="subunit">
    <text evidence="1">Homodimer; facilitating circular RNAs (circRNAs) formation.</text>
</comment>
<comment type="subcellular location">
    <subcellularLocation>
        <location evidence="1">Nucleus speckle</location>
    </subcellularLocation>
</comment>
<comment type="similarity">
    <text evidence="4">Belongs to the ZC3H14 family.</text>
</comment>
<proteinExistence type="evidence at transcript level"/>
<name>ZC3HE_CHICK</name>
<keyword id="KW-0479">Metal-binding</keyword>
<keyword id="KW-0539">Nucleus</keyword>
<keyword id="KW-1185">Reference proteome</keyword>
<keyword id="KW-0677">Repeat</keyword>
<keyword id="KW-0694">RNA-binding</keyword>
<keyword id="KW-0862">Zinc</keyword>
<keyword id="KW-0863">Zinc-finger</keyword>
<sequence>MEIGTEISRKIRGAIKGKLQELGAYVDEELPDYIMVMVANKKSQEQMTEDLSLFLGNNTVRFTVWLHGVLDKLRSVTTEPSGTKSSEPNIFESNHSSSKSSSCVSDERRREDTLPPLAVSSTRSERTDSRVSTSSQEQRNTASRQSCEDGSASRLMSTVKPLRELSPSEAVIDIKPEPDDLIDEDLNFVQENPLSRKKPIVTVTYGSSRPTAEIYRPPASRSADGSLQVHRLPQQGNLQGNRQLDTQSCRSLETVQLCNPEAFGSLAESYRPTSKLSADKVGSEEEGSRKRRLPIVSSVVKVKKFCNDGEEEEEEDDYGLRTGSISSSVSVPAKPERRPSLPPSKQVNKNLILKAISEAQESVTKTTNYSAVPQKQTVPVAPRTRISPEESHLEVIHLQSRLPALCSQLQVEEPKEQAVEGIQGAEQKELSSRLQVDPVIEDTLQVTQDYYDGESMVHTDTRSFILKKPKLSEEIAAQNQQLGKRATEAMRVLSGRLIQTRDQIAQPEKPASPKFIVTLDGVPSPPGYLSDQEEEDMYITEGLKPIPQNICAGKGLKGLRAQQMQIVTRQLDSSDVEMEQLNVLQKQEKVLERCKYWPACKNGDECVYHHPTQPCKVFPNCKFADKCLFIHPNCKYDAKCTKPDCPYTHASRRNPLPSPKPVPLPTQSVSSSSPLCKFFPACKKMECPFYHPKHCRFNTQCTRPDCTFYHPTIAVPPRHALKWTRTQTSE</sequence>
<accession>Q5F3Z9</accession>
<reference key="1">
    <citation type="journal article" date="2005" name="Genome Biol.">
        <title>Full-length cDNAs from chicken bursal lymphocytes to facilitate gene function analysis.</title>
        <authorList>
            <person name="Caldwell R.B."/>
            <person name="Kierzek A.M."/>
            <person name="Arakawa H."/>
            <person name="Bezzubov Y."/>
            <person name="Zaim J."/>
            <person name="Fiedler P."/>
            <person name="Kutter S."/>
            <person name="Blagodatski A."/>
            <person name="Kostovska D."/>
            <person name="Koter M."/>
            <person name="Plachy J."/>
            <person name="Carninci P."/>
            <person name="Hayashizaki Y."/>
            <person name="Buerstedde J.-M."/>
        </authorList>
    </citation>
    <scope>NUCLEOTIDE SEQUENCE [LARGE SCALE MRNA]</scope>
    <source>
        <strain>CB</strain>
        <tissue>Bursa of Fabricius</tissue>
    </source>
</reference>
<dbReference type="EMBL" id="AJ851501">
    <property type="protein sequence ID" value="CAH65135.1"/>
    <property type="molecule type" value="mRNA"/>
</dbReference>
<dbReference type="RefSeq" id="NP_001012604.1">
    <property type="nucleotide sequence ID" value="NM_001012586.2"/>
</dbReference>
<dbReference type="FunCoup" id="Q5F3Z9">
    <property type="interactions" value="1514"/>
</dbReference>
<dbReference type="STRING" id="9031.ENSGALP00000036845"/>
<dbReference type="PaxDb" id="9031-ENSGALP00000036845"/>
<dbReference type="GeneID" id="423399"/>
<dbReference type="KEGG" id="gga:423399"/>
<dbReference type="CTD" id="79882"/>
<dbReference type="VEuPathDB" id="HostDB:geneid_423399"/>
<dbReference type="eggNOG" id="KOG3702">
    <property type="taxonomic scope" value="Eukaryota"/>
</dbReference>
<dbReference type="InParanoid" id="Q5F3Z9"/>
<dbReference type="OrthoDB" id="5589010at2759"/>
<dbReference type="PhylomeDB" id="Q5F3Z9"/>
<dbReference type="PRO" id="PR:Q5F3Z9"/>
<dbReference type="Proteomes" id="UP000000539">
    <property type="component" value="Unassembled WGS sequence"/>
</dbReference>
<dbReference type="GO" id="GO:0005737">
    <property type="term" value="C:cytoplasm"/>
    <property type="evidence" value="ECO:0000318"/>
    <property type="project" value="GO_Central"/>
</dbReference>
<dbReference type="GO" id="GO:0016607">
    <property type="term" value="C:nuclear speck"/>
    <property type="evidence" value="ECO:0000250"/>
    <property type="project" value="UniProtKB"/>
</dbReference>
<dbReference type="GO" id="GO:0005634">
    <property type="term" value="C:nucleus"/>
    <property type="evidence" value="ECO:0000250"/>
    <property type="project" value="UniProtKB"/>
</dbReference>
<dbReference type="GO" id="GO:0008143">
    <property type="term" value="F:poly(A) binding"/>
    <property type="evidence" value="ECO:0000250"/>
    <property type="project" value="UniProtKB"/>
</dbReference>
<dbReference type="GO" id="GO:0036002">
    <property type="term" value="F:pre-mRNA binding"/>
    <property type="evidence" value="ECO:0000250"/>
    <property type="project" value="UniProtKB"/>
</dbReference>
<dbReference type="GO" id="GO:0008270">
    <property type="term" value="F:zinc ion binding"/>
    <property type="evidence" value="ECO:0007669"/>
    <property type="project" value="UniProtKB-KW"/>
</dbReference>
<dbReference type="GO" id="GO:0048255">
    <property type="term" value="P:mRNA stabilization"/>
    <property type="evidence" value="ECO:0000250"/>
    <property type="project" value="UniProtKB"/>
</dbReference>
<dbReference type="GO" id="GO:0043488">
    <property type="term" value="P:regulation of mRNA stability"/>
    <property type="evidence" value="ECO:0000318"/>
    <property type="project" value="GO_Central"/>
</dbReference>
<dbReference type="FunFam" id="4.10.1000.30:FF:000001">
    <property type="entry name" value="Zinc finger CCCH domain-containing protein 14"/>
    <property type="match status" value="1"/>
</dbReference>
<dbReference type="FunFam" id="4.10.1000.40:FF:000006">
    <property type="entry name" value="Zinc finger CCCH domain-containing protein 14"/>
    <property type="match status" value="1"/>
</dbReference>
<dbReference type="FunFam" id="1.20.1390.10:FF:000006">
    <property type="entry name" value="zinc finger CCCH domain-containing protein 14"/>
    <property type="match status" value="1"/>
</dbReference>
<dbReference type="FunFam" id="4.10.1000.40:FF:000001">
    <property type="entry name" value="zinc finger CCCH domain-containing protein 14 isoform X2"/>
    <property type="match status" value="1"/>
</dbReference>
<dbReference type="Gene3D" id="4.10.1000.30">
    <property type="match status" value="1"/>
</dbReference>
<dbReference type="Gene3D" id="4.10.1000.40">
    <property type="match status" value="1"/>
</dbReference>
<dbReference type="Gene3D" id="1.20.1390.10">
    <property type="entry name" value="PWI domain"/>
    <property type="match status" value="1"/>
</dbReference>
<dbReference type="InterPro" id="IPR040366">
    <property type="entry name" value="Nab2/ZC3H14"/>
</dbReference>
<dbReference type="InterPro" id="IPR000571">
    <property type="entry name" value="Znf_CCCH"/>
</dbReference>
<dbReference type="PANTHER" id="PTHR14738">
    <property type="entry name" value="ZINC FINGER CCCH DOMAIN-CONTAINING PROTEIN 14"/>
    <property type="match status" value="1"/>
</dbReference>
<dbReference type="PANTHER" id="PTHR14738:SF29">
    <property type="entry name" value="ZINC FINGER CCCH DOMAIN-CONTAINING PROTEIN 14"/>
    <property type="match status" value="1"/>
</dbReference>
<dbReference type="Pfam" id="PF14608">
    <property type="entry name" value="zf-CCCH_2"/>
    <property type="match status" value="5"/>
</dbReference>
<dbReference type="SMART" id="SM00356">
    <property type="entry name" value="ZnF_C3H1"/>
    <property type="match status" value="3"/>
</dbReference>
<dbReference type="PROSITE" id="PS50103">
    <property type="entry name" value="ZF_C3H1"/>
    <property type="match status" value="3"/>
</dbReference>
<feature type="chain" id="PRO_0000331315" description="Zinc finger CCCH domain-containing protein 14">
    <location>
        <begin position="1"/>
        <end position="730"/>
    </location>
</feature>
<feature type="zinc finger region" description="C3H1-type 1" evidence="2">
    <location>
        <begin position="588"/>
        <end position="613"/>
    </location>
</feature>
<feature type="zinc finger region" description="C3H1-type 2" evidence="2">
    <location>
        <begin position="614"/>
        <end position="633"/>
    </location>
</feature>
<feature type="zinc finger region" description="C3H1-type 3" evidence="2">
    <location>
        <begin position="634"/>
        <end position="649"/>
    </location>
</feature>
<feature type="zinc finger region" description="C3H1-type 4" evidence="2">
    <location>
        <begin position="676"/>
        <end position="693"/>
    </location>
</feature>
<feature type="zinc finger region" description="C3H1-type 5" evidence="2">
    <location>
        <begin position="695"/>
        <end position="713"/>
    </location>
</feature>
<feature type="region of interest" description="Disordered" evidence="3">
    <location>
        <begin position="76"/>
        <end position="154"/>
    </location>
</feature>
<feature type="region of interest" description="Disordered" evidence="3">
    <location>
        <begin position="269"/>
        <end position="290"/>
    </location>
</feature>
<feature type="region of interest" description="Disordered" evidence="3">
    <location>
        <begin position="307"/>
        <end position="345"/>
    </location>
</feature>
<feature type="compositionally biased region" description="Polar residues" evidence="3">
    <location>
        <begin position="76"/>
        <end position="92"/>
    </location>
</feature>
<feature type="compositionally biased region" description="Low complexity" evidence="3">
    <location>
        <begin position="93"/>
        <end position="104"/>
    </location>
</feature>
<feature type="compositionally biased region" description="Polar residues" evidence="3">
    <location>
        <begin position="130"/>
        <end position="145"/>
    </location>
</feature>
<feature type="compositionally biased region" description="Basic and acidic residues" evidence="3">
    <location>
        <begin position="277"/>
        <end position="288"/>
    </location>
</feature>
<feature type="compositionally biased region" description="Acidic residues" evidence="3">
    <location>
        <begin position="308"/>
        <end position="317"/>
    </location>
</feature>
<evidence type="ECO:0000250" key="1">
    <source>
        <dbReference type="UniProtKB" id="Q6PJT7"/>
    </source>
</evidence>
<evidence type="ECO:0000255" key="2">
    <source>
        <dbReference type="PROSITE-ProRule" id="PRU00723"/>
    </source>
</evidence>
<evidence type="ECO:0000256" key="3">
    <source>
        <dbReference type="SAM" id="MobiDB-lite"/>
    </source>
</evidence>
<evidence type="ECO:0000305" key="4"/>
<gene>
    <name type="primary">ZC3H14</name>
    <name type="ORF">RCJMB04_4a10</name>
</gene>
<protein>
    <recommendedName>
        <fullName>Zinc finger CCCH domain-containing protein 14</fullName>
    </recommendedName>
</protein>
<organism>
    <name type="scientific">Gallus gallus</name>
    <name type="common">Chicken</name>
    <dbReference type="NCBI Taxonomy" id="9031"/>
    <lineage>
        <taxon>Eukaryota</taxon>
        <taxon>Metazoa</taxon>
        <taxon>Chordata</taxon>
        <taxon>Craniata</taxon>
        <taxon>Vertebrata</taxon>
        <taxon>Euteleostomi</taxon>
        <taxon>Archelosauria</taxon>
        <taxon>Archosauria</taxon>
        <taxon>Dinosauria</taxon>
        <taxon>Saurischia</taxon>
        <taxon>Theropoda</taxon>
        <taxon>Coelurosauria</taxon>
        <taxon>Aves</taxon>
        <taxon>Neognathae</taxon>
        <taxon>Galloanserae</taxon>
        <taxon>Galliformes</taxon>
        <taxon>Phasianidae</taxon>
        <taxon>Phasianinae</taxon>
        <taxon>Gallus</taxon>
    </lineage>
</organism>